<sequence length="361" mass="40617">MKAKVIVGMSGGVDSSVAAWLLKEQGYQVEGLFMKNWEQDDHNDFCPAAKDLADAQAVCNQLRIPLHTVNFSKEYWDRVFAYFLSEYEKGRTPNPDVLCNKEIKFNAFLNHALNLGADYIATGHYAKNTIEGSIGYLFKAKDREKDQTYFLHAVEPEALSKTIFPIGDFTKPQIREFAKQLGLVTHAKKDSTGICFIGEKRFKTFLNEFILAKPGEIKSTGGKTLGQHDGLMFYTLGQRQGLGIGGLQNSTDEPWYVVDKDIASNTLYVAQGSQHPMLYSQGLICGPIHWLADYENHLPLTCFAKTRYRQTDQACMISPPDNNLHYVIFSSPQRAITPGQFIVFYEKNQCLGGATIEQIIR</sequence>
<accession>Q5X5H6</accession>
<keyword id="KW-0067">ATP-binding</keyword>
<keyword id="KW-0963">Cytoplasm</keyword>
<keyword id="KW-1015">Disulfide bond</keyword>
<keyword id="KW-0547">Nucleotide-binding</keyword>
<keyword id="KW-0694">RNA-binding</keyword>
<keyword id="KW-0808">Transferase</keyword>
<keyword id="KW-0819">tRNA processing</keyword>
<keyword id="KW-0820">tRNA-binding</keyword>
<feature type="chain" id="PRO_0000349680" description="tRNA-specific 2-thiouridylase MnmA">
    <location>
        <begin position="1"/>
        <end position="361"/>
    </location>
</feature>
<feature type="region of interest" description="Interaction with target base in tRNA" evidence="1">
    <location>
        <begin position="94"/>
        <end position="96"/>
    </location>
</feature>
<feature type="region of interest" description="Interaction with tRNA" evidence="1">
    <location>
        <begin position="145"/>
        <end position="147"/>
    </location>
</feature>
<feature type="region of interest" description="Interaction with tRNA" evidence="1">
    <location>
        <begin position="307"/>
        <end position="308"/>
    </location>
</feature>
<feature type="active site" description="Nucleophile" evidence="1">
    <location>
        <position position="99"/>
    </location>
</feature>
<feature type="active site" description="Cysteine persulfide intermediate" evidence="1">
    <location>
        <position position="195"/>
    </location>
</feature>
<feature type="binding site" evidence="1">
    <location>
        <begin position="8"/>
        <end position="15"/>
    </location>
    <ligand>
        <name>ATP</name>
        <dbReference type="ChEBI" id="CHEBI:30616"/>
    </ligand>
</feature>
<feature type="binding site" evidence="1">
    <location>
        <position position="34"/>
    </location>
    <ligand>
        <name>ATP</name>
        <dbReference type="ChEBI" id="CHEBI:30616"/>
    </ligand>
</feature>
<feature type="binding site" evidence="1">
    <location>
        <position position="123"/>
    </location>
    <ligand>
        <name>ATP</name>
        <dbReference type="ChEBI" id="CHEBI:30616"/>
    </ligand>
</feature>
<feature type="site" description="Interaction with tRNA" evidence="1">
    <location>
        <position position="124"/>
    </location>
</feature>
<feature type="site" description="Interaction with tRNA" evidence="1">
    <location>
        <position position="340"/>
    </location>
</feature>
<feature type="disulfide bond" description="Alternate" evidence="1">
    <location>
        <begin position="99"/>
        <end position="195"/>
    </location>
</feature>
<protein>
    <recommendedName>
        <fullName evidence="1">tRNA-specific 2-thiouridylase MnmA</fullName>
        <ecNumber evidence="1">2.8.1.13</ecNumber>
    </recommendedName>
</protein>
<comment type="function">
    <text evidence="1">Catalyzes the 2-thiolation of uridine at the wobble position (U34) of tRNA, leading to the formation of s(2)U34.</text>
</comment>
<comment type="catalytic activity">
    <reaction evidence="1">
        <text>S-sulfanyl-L-cysteinyl-[protein] + uridine(34) in tRNA + AH2 + ATP = 2-thiouridine(34) in tRNA + L-cysteinyl-[protein] + A + AMP + diphosphate + H(+)</text>
        <dbReference type="Rhea" id="RHEA:47032"/>
        <dbReference type="Rhea" id="RHEA-COMP:10131"/>
        <dbReference type="Rhea" id="RHEA-COMP:11726"/>
        <dbReference type="Rhea" id="RHEA-COMP:11727"/>
        <dbReference type="Rhea" id="RHEA-COMP:11728"/>
        <dbReference type="ChEBI" id="CHEBI:13193"/>
        <dbReference type="ChEBI" id="CHEBI:15378"/>
        <dbReference type="ChEBI" id="CHEBI:17499"/>
        <dbReference type="ChEBI" id="CHEBI:29950"/>
        <dbReference type="ChEBI" id="CHEBI:30616"/>
        <dbReference type="ChEBI" id="CHEBI:33019"/>
        <dbReference type="ChEBI" id="CHEBI:61963"/>
        <dbReference type="ChEBI" id="CHEBI:65315"/>
        <dbReference type="ChEBI" id="CHEBI:87170"/>
        <dbReference type="ChEBI" id="CHEBI:456215"/>
        <dbReference type="EC" id="2.8.1.13"/>
    </reaction>
</comment>
<comment type="subcellular location">
    <subcellularLocation>
        <location evidence="1">Cytoplasm</location>
    </subcellularLocation>
</comment>
<comment type="similarity">
    <text evidence="1">Belongs to the MnmA/TRMU family.</text>
</comment>
<name>MNMA_LEGPA</name>
<dbReference type="EC" id="2.8.1.13" evidence="1"/>
<dbReference type="EMBL" id="CR628336">
    <property type="protein sequence ID" value="CAH12495.1"/>
    <property type="molecule type" value="Genomic_DNA"/>
</dbReference>
<dbReference type="RefSeq" id="WP_011213684.1">
    <property type="nucleotide sequence ID" value="NC_006368.1"/>
</dbReference>
<dbReference type="SMR" id="Q5X5H6"/>
<dbReference type="KEGG" id="lpp:lpp1344"/>
<dbReference type="LegioList" id="lpp1344"/>
<dbReference type="HOGENOM" id="CLU_035188_1_0_6"/>
<dbReference type="GO" id="GO:0005737">
    <property type="term" value="C:cytoplasm"/>
    <property type="evidence" value="ECO:0007669"/>
    <property type="project" value="UniProtKB-SubCell"/>
</dbReference>
<dbReference type="GO" id="GO:0005524">
    <property type="term" value="F:ATP binding"/>
    <property type="evidence" value="ECO:0007669"/>
    <property type="project" value="UniProtKB-KW"/>
</dbReference>
<dbReference type="GO" id="GO:0000049">
    <property type="term" value="F:tRNA binding"/>
    <property type="evidence" value="ECO:0007669"/>
    <property type="project" value="UniProtKB-KW"/>
</dbReference>
<dbReference type="GO" id="GO:0103016">
    <property type="term" value="F:tRNA-uridine 2-sulfurtransferase activity"/>
    <property type="evidence" value="ECO:0007669"/>
    <property type="project" value="UniProtKB-EC"/>
</dbReference>
<dbReference type="GO" id="GO:0002143">
    <property type="term" value="P:tRNA wobble position uridine thiolation"/>
    <property type="evidence" value="ECO:0007669"/>
    <property type="project" value="TreeGrafter"/>
</dbReference>
<dbReference type="CDD" id="cd01998">
    <property type="entry name" value="MnmA_TRMU-like"/>
    <property type="match status" value="1"/>
</dbReference>
<dbReference type="FunFam" id="2.30.30.280:FF:000001">
    <property type="entry name" value="tRNA-specific 2-thiouridylase MnmA"/>
    <property type="match status" value="1"/>
</dbReference>
<dbReference type="FunFam" id="2.40.30.10:FF:000023">
    <property type="entry name" value="tRNA-specific 2-thiouridylase MnmA"/>
    <property type="match status" value="1"/>
</dbReference>
<dbReference type="FunFam" id="3.40.50.620:FF:000004">
    <property type="entry name" value="tRNA-specific 2-thiouridylase MnmA"/>
    <property type="match status" value="1"/>
</dbReference>
<dbReference type="Gene3D" id="2.30.30.280">
    <property type="entry name" value="Adenine nucleotide alpha hydrolases-like domains"/>
    <property type="match status" value="1"/>
</dbReference>
<dbReference type="Gene3D" id="3.40.50.620">
    <property type="entry name" value="HUPs"/>
    <property type="match status" value="1"/>
</dbReference>
<dbReference type="Gene3D" id="2.40.30.10">
    <property type="entry name" value="Translation factors"/>
    <property type="match status" value="1"/>
</dbReference>
<dbReference type="HAMAP" id="MF_00144">
    <property type="entry name" value="tRNA_thiouridyl_MnmA"/>
    <property type="match status" value="1"/>
</dbReference>
<dbReference type="InterPro" id="IPR004506">
    <property type="entry name" value="MnmA-like"/>
</dbReference>
<dbReference type="InterPro" id="IPR046885">
    <property type="entry name" value="MnmA-like_C"/>
</dbReference>
<dbReference type="InterPro" id="IPR046884">
    <property type="entry name" value="MnmA-like_central"/>
</dbReference>
<dbReference type="InterPro" id="IPR023382">
    <property type="entry name" value="MnmA-like_central_sf"/>
</dbReference>
<dbReference type="InterPro" id="IPR014729">
    <property type="entry name" value="Rossmann-like_a/b/a_fold"/>
</dbReference>
<dbReference type="NCBIfam" id="NF001138">
    <property type="entry name" value="PRK00143.1"/>
    <property type="match status" value="1"/>
</dbReference>
<dbReference type="NCBIfam" id="TIGR00420">
    <property type="entry name" value="trmU"/>
    <property type="match status" value="1"/>
</dbReference>
<dbReference type="PANTHER" id="PTHR11933:SF5">
    <property type="entry name" value="MITOCHONDRIAL TRNA-SPECIFIC 2-THIOURIDYLASE 1"/>
    <property type="match status" value="1"/>
</dbReference>
<dbReference type="PANTHER" id="PTHR11933">
    <property type="entry name" value="TRNA 5-METHYLAMINOMETHYL-2-THIOURIDYLATE -METHYLTRANSFERASE"/>
    <property type="match status" value="1"/>
</dbReference>
<dbReference type="Pfam" id="PF03054">
    <property type="entry name" value="tRNA_Me_trans"/>
    <property type="match status" value="1"/>
</dbReference>
<dbReference type="Pfam" id="PF20258">
    <property type="entry name" value="tRNA_Me_trans_C"/>
    <property type="match status" value="1"/>
</dbReference>
<dbReference type="Pfam" id="PF20259">
    <property type="entry name" value="tRNA_Me_trans_M"/>
    <property type="match status" value="1"/>
</dbReference>
<dbReference type="SUPFAM" id="SSF52402">
    <property type="entry name" value="Adenine nucleotide alpha hydrolases-like"/>
    <property type="match status" value="1"/>
</dbReference>
<evidence type="ECO:0000255" key="1">
    <source>
        <dbReference type="HAMAP-Rule" id="MF_00144"/>
    </source>
</evidence>
<gene>
    <name evidence="1" type="primary">mnmA</name>
    <name type="ordered locus">lpp1344</name>
</gene>
<proteinExistence type="inferred from homology"/>
<reference key="1">
    <citation type="journal article" date="2004" name="Nat. Genet.">
        <title>Evidence in the Legionella pneumophila genome for exploitation of host cell functions and high genome plasticity.</title>
        <authorList>
            <person name="Cazalet C."/>
            <person name="Rusniok C."/>
            <person name="Brueggemann H."/>
            <person name="Zidane N."/>
            <person name="Magnier A."/>
            <person name="Ma L."/>
            <person name="Tichit M."/>
            <person name="Jarraud S."/>
            <person name="Bouchier C."/>
            <person name="Vandenesch F."/>
            <person name="Kunst F."/>
            <person name="Etienne J."/>
            <person name="Glaser P."/>
            <person name="Buchrieser C."/>
        </authorList>
    </citation>
    <scope>NUCLEOTIDE SEQUENCE [LARGE SCALE GENOMIC DNA]</scope>
    <source>
        <strain>Paris</strain>
    </source>
</reference>
<organism>
    <name type="scientific">Legionella pneumophila (strain Paris)</name>
    <dbReference type="NCBI Taxonomy" id="297246"/>
    <lineage>
        <taxon>Bacteria</taxon>
        <taxon>Pseudomonadati</taxon>
        <taxon>Pseudomonadota</taxon>
        <taxon>Gammaproteobacteria</taxon>
        <taxon>Legionellales</taxon>
        <taxon>Legionellaceae</taxon>
        <taxon>Legionella</taxon>
    </lineage>
</organism>